<protein>
    <recommendedName>
        <fullName>Probable ribosome-binding factor A, chloroplastic</fullName>
    </recommendedName>
</protein>
<proteinExistence type="evidence at transcript level"/>
<feature type="transit peptide" description="Chloroplast">
    <location>
        <begin position="1"/>
        <end position="52"/>
    </location>
</feature>
<feature type="chain" id="PRO_0000030225" description="Probable ribosome-binding factor A, chloroplastic">
    <location>
        <begin position="53"/>
        <end position="215"/>
    </location>
</feature>
<feature type="region of interest" description="Disordered" evidence="1">
    <location>
        <begin position="183"/>
        <end position="210"/>
    </location>
</feature>
<feature type="compositionally biased region" description="Basic and acidic residues" evidence="1">
    <location>
        <begin position="183"/>
        <end position="192"/>
    </location>
</feature>
<feature type="compositionally biased region" description="Acidic residues" evidence="1">
    <location>
        <begin position="194"/>
        <end position="210"/>
    </location>
</feature>
<sequence length="215" mass="24289">MPNLLHTNQSHFFFLHHPPIYTVSSKTQAFHFPQSMAPVNLRTNLSVRRTVRCMANPRRVKMVAKQIMRELSDMLLTDTVLQHAVLPEAALGADRYLSSLTTISDVEVSNDLQVVKVYVSVFGDDRGKDVAIAGLKSKAKYVRSELGKRMKLRLTPEVRFIEDEAMERGSRVIAILDKIKAEKGSGEGKTEPSDSTEDDQDWEVDDPDEDIIYVK</sequence>
<comment type="subcellular location">
    <subcellularLocation>
        <location evidence="2">Plastid</location>
        <location evidence="2">Chloroplast</location>
    </subcellularLocation>
</comment>
<comment type="similarity">
    <text evidence="2">Belongs to the RbfA family.</text>
</comment>
<comment type="sequence caution" evidence="2">
    <conflict type="erroneous gene model prediction">
        <sequence resource="EMBL-CDS" id="CAA18852"/>
    </conflict>
</comment>
<comment type="sequence caution" evidence="2">
    <conflict type="erroneous gene model prediction">
        <sequence resource="EMBL-CDS" id="CAB80190"/>
    </conflict>
</comment>
<reference key="1">
    <citation type="journal article" date="1999" name="Nature">
        <title>Sequence and analysis of chromosome 4 of the plant Arabidopsis thaliana.</title>
        <authorList>
            <person name="Mayer K.F.X."/>
            <person name="Schueller C."/>
            <person name="Wambutt R."/>
            <person name="Murphy G."/>
            <person name="Volckaert G."/>
            <person name="Pohl T."/>
            <person name="Duesterhoeft A."/>
            <person name="Stiekema W."/>
            <person name="Entian K.-D."/>
            <person name="Terryn N."/>
            <person name="Harris B."/>
            <person name="Ansorge W."/>
            <person name="Brandt P."/>
            <person name="Grivell L.A."/>
            <person name="Rieger M."/>
            <person name="Weichselgartner M."/>
            <person name="de Simone V."/>
            <person name="Obermaier B."/>
            <person name="Mache R."/>
            <person name="Mueller M."/>
            <person name="Kreis M."/>
            <person name="Delseny M."/>
            <person name="Puigdomenech P."/>
            <person name="Watson M."/>
            <person name="Schmidtheini T."/>
            <person name="Reichert B."/>
            <person name="Portetelle D."/>
            <person name="Perez-Alonso M."/>
            <person name="Boutry M."/>
            <person name="Bancroft I."/>
            <person name="Vos P."/>
            <person name="Hoheisel J."/>
            <person name="Zimmermann W."/>
            <person name="Wedler H."/>
            <person name="Ridley P."/>
            <person name="Langham S.-A."/>
            <person name="McCullagh B."/>
            <person name="Bilham L."/>
            <person name="Robben J."/>
            <person name="van der Schueren J."/>
            <person name="Grymonprez B."/>
            <person name="Chuang Y.-J."/>
            <person name="Vandenbussche F."/>
            <person name="Braeken M."/>
            <person name="Weltjens I."/>
            <person name="Voet M."/>
            <person name="Bastiaens I."/>
            <person name="Aert R."/>
            <person name="Defoor E."/>
            <person name="Weitzenegger T."/>
            <person name="Bothe G."/>
            <person name="Ramsperger U."/>
            <person name="Hilbert H."/>
            <person name="Braun M."/>
            <person name="Holzer E."/>
            <person name="Brandt A."/>
            <person name="Peters S."/>
            <person name="van Staveren M."/>
            <person name="Dirkse W."/>
            <person name="Mooijman P."/>
            <person name="Klein Lankhorst R."/>
            <person name="Rose M."/>
            <person name="Hauf J."/>
            <person name="Koetter P."/>
            <person name="Berneiser S."/>
            <person name="Hempel S."/>
            <person name="Feldpausch M."/>
            <person name="Lamberth S."/>
            <person name="Van den Daele H."/>
            <person name="De Keyser A."/>
            <person name="Buysshaert C."/>
            <person name="Gielen J."/>
            <person name="Villarroel R."/>
            <person name="De Clercq R."/>
            <person name="van Montagu M."/>
            <person name="Rogers J."/>
            <person name="Cronin A."/>
            <person name="Quail M.A."/>
            <person name="Bray-Allen S."/>
            <person name="Clark L."/>
            <person name="Doggett J."/>
            <person name="Hall S."/>
            <person name="Kay M."/>
            <person name="Lennard N."/>
            <person name="McLay K."/>
            <person name="Mayes R."/>
            <person name="Pettett A."/>
            <person name="Rajandream M.A."/>
            <person name="Lyne M."/>
            <person name="Benes V."/>
            <person name="Rechmann S."/>
            <person name="Borkova D."/>
            <person name="Bloecker H."/>
            <person name="Scharfe M."/>
            <person name="Grimm M."/>
            <person name="Loehnert T.-H."/>
            <person name="Dose S."/>
            <person name="de Haan M."/>
            <person name="Maarse A.C."/>
            <person name="Schaefer M."/>
            <person name="Mueller-Auer S."/>
            <person name="Gabel C."/>
            <person name="Fuchs M."/>
            <person name="Fartmann B."/>
            <person name="Granderath K."/>
            <person name="Dauner D."/>
            <person name="Herzl A."/>
            <person name="Neumann S."/>
            <person name="Argiriou A."/>
            <person name="Vitale D."/>
            <person name="Liguori R."/>
            <person name="Piravandi E."/>
            <person name="Massenet O."/>
            <person name="Quigley F."/>
            <person name="Clabauld G."/>
            <person name="Muendlein A."/>
            <person name="Felber R."/>
            <person name="Schnabl S."/>
            <person name="Hiller R."/>
            <person name="Schmidt W."/>
            <person name="Lecharny A."/>
            <person name="Aubourg S."/>
            <person name="Chefdor F."/>
            <person name="Cooke R."/>
            <person name="Berger C."/>
            <person name="Monfort A."/>
            <person name="Casacuberta E."/>
            <person name="Gibbons T."/>
            <person name="Weber N."/>
            <person name="Vandenbol M."/>
            <person name="Bargues M."/>
            <person name="Terol J."/>
            <person name="Torres A."/>
            <person name="Perez-Perez A."/>
            <person name="Purnelle B."/>
            <person name="Bent E."/>
            <person name="Johnson S."/>
            <person name="Tacon D."/>
            <person name="Jesse T."/>
            <person name="Heijnen L."/>
            <person name="Schwarz S."/>
            <person name="Scholler P."/>
            <person name="Heber S."/>
            <person name="Francs P."/>
            <person name="Bielke C."/>
            <person name="Frishman D."/>
            <person name="Haase D."/>
            <person name="Lemcke K."/>
            <person name="Mewes H.-W."/>
            <person name="Stocker S."/>
            <person name="Zaccaria P."/>
            <person name="Bevan M."/>
            <person name="Wilson R.K."/>
            <person name="de la Bastide M."/>
            <person name="Habermann K."/>
            <person name="Parnell L."/>
            <person name="Dedhia N."/>
            <person name="Gnoj L."/>
            <person name="Schutz K."/>
            <person name="Huang E."/>
            <person name="Spiegel L."/>
            <person name="Sekhon M."/>
            <person name="Murray J."/>
            <person name="Sheet P."/>
            <person name="Cordes M."/>
            <person name="Abu-Threideh J."/>
            <person name="Stoneking T."/>
            <person name="Kalicki J."/>
            <person name="Graves T."/>
            <person name="Harmon G."/>
            <person name="Edwards J."/>
            <person name="Latreille P."/>
            <person name="Courtney L."/>
            <person name="Cloud J."/>
            <person name="Abbott A."/>
            <person name="Scott K."/>
            <person name="Johnson D."/>
            <person name="Minx P."/>
            <person name="Bentley D."/>
            <person name="Fulton B."/>
            <person name="Miller N."/>
            <person name="Greco T."/>
            <person name="Kemp K."/>
            <person name="Kramer J."/>
            <person name="Fulton L."/>
            <person name="Mardis E."/>
            <person name="Dante M."/>
            <person name="Pepin K."/>
            <person name="Hillier L.W."/>
            <person name="Nelson J."/>
            <person name="Spieth J."/>
            <person name="Ryan E."/>
            <person name="Andrews S."/>
            <person name="Geisel C."/>
            <person name="Layman D."/>
            <person name="Du H."/>
            <person name="Ali J."/>
            <person name="Berghoff A."/>
            <person name="Jones K."/>
            <person name="Drone K."/>
            <person name="Cotton M."/>
            <person name="Joshu C."/>
            <person name="Antonoiu B."/>
            <person name="Zidanic M."/>
            <person name="Strong C."/>
            <person name="Sun H."/>
            <person name="Lamar B."/>
            <person name="Yordan C."/>
            <person name="Ma P."/>
            <person name="Zhong J."/>
            <person name="Preston R."/>
            <person name="Vil D."/>
            <person name="Shekher M."/>
            <person name="Matero A."/>
            <person name="Shah R."/>
            <person name="Swaby I.K."/>
            <person name="O'Shaughnessy A."/>
            <person name="Rodriguez M."/>
            <person name="Hoffman J."/>
            <person name="Till S."/>
            <person name="Granat S."/>
            <person name="Shohdy N."/>
            <person name="Hasegawa A."/>
            <person name="Hameed A."/>
            <person name="Lodhi M."/>
            <person name="Johnson A."/>
            <person name="Chen E."/>
            <person name="Marra M.A."/>
            <person name="Martienssen R."/>
            <person name="McCombie W.R."/>
        </authorList>
    </citation>
    <scope>NUCLEOTIDE SEQUENCE [LARGE SCALE GENOMIC DNA]</scope>
    <source>
        <strain>cv. Columbia</strain>
    </source>
</reference>
<reference key="2">
    <citation type="journal article" date="2017" name="Plant J.">
        <title>Araport11: a complete reannotation of the Arabidopsis thaliana reference genome.</title>
        <authorList>
            <person name="Cheng C.Y."/>
            <person name="Krishnakumar V."/>
            <person name="Chan A.P."/>
            <person name="Thibaud-Nissen F."/>
            <person name="Schobel S."/>
            <person name="Town C.D."/>
        </authorList>
    </citation>
    <scope>GENOME REANNOTATION</scope>
    <source>
        <strain>cv. Columbia</strain>
    </source>
</reference>
<reference key="3">
    <citation type="journal article" date="2003" name="Science">
        <title>Empirical analysis of transcriptional activity in the Arabidopsis genome.</title>
        <authorList>
            <person name="Yamada K."/>
            <person name="Lim J."/>
            <person name="Dale J.M."/>
            <person name="Chen H."/>
            <person name="Shinn P."/>
            <person name="Palm C.J."/>
            <person name="Southwick A.M."/>
            <person name="Wu H.C."/>
            <person name="Kim C.J."/>
            <person name="Nguyen M."/>
            <person name="Pham P.K."/>
            <person name="Cheuk R.F."/>
            <person name="Karlin-Newmann G."/>
            <person name="Liu S.X."/>
            <person name="Lam B."/>
            <person name="Sakano H."/>
            <person name="Wu T."/>
            <person name="Yu G."/>
            <person name="Miranda M."/>
            <person name="Quach H.L."/>
            <person name="Tripp M."/>
            <person name="Chang C.H."/>
            <person name="Lee J.M."/>
            <person name="Toriumi M.J."/>
            <person name="Chan M.M."/>
            <person name="Tang C.C."/>
            <person name="Onodera C.S."/>
            <person name="Deng J.M."/>
            <person name="Akiyama K."/>
            <person name="Ansari Y."/>
            <person name="Arakawa T."/>
            <person name="Banh J."/>
            <person name="Banno F."/>
            <person name="Bowser L."/>
            <person name="Brooks S.Y."/>
            <person name="Carninci P."/>
            <person name="Chao Q."/>
            <person name="Choy N."/>
            <person name="Enju A."/>
            <person name="Goldsmith A.D."/>
            <person name="Gurjal M."/>
            <person name="Hansen N.F."/>
            <person name="Hayashizaki Y."/>
            <person name="Johnson-Hopson C."/>
            <person name="Hsuan V.W."/>
            <person name="Iida K."/>
            <person name="Karnes M."/>
            <person name="Khan S."/>
            <person name="Koesema E."/>
            <person name="Ishida J."/>
            <person name="Jiang P.X."/>
            <person name="Jones T."/>
            <person name="Kawai J."/>
            <person name="Kamiya A."/>
            <person name="Meyers C."/>
            <person name="Nakajima M."/>
            <person name="Narusaka M."/>
            <person name="Seki M."/>
            <person name="Sakurai T."/>
            <person name="Satou M."/>
            <person name="Tamse R."/>
            <person name="Vaysberg M."/>
            <person name="Wallender E.K."/>
            <person name="Wong C."/>
            <person name="Yamamura Y."/>
            <person name="Yuan S."/>
            <person name="Shinozaki K."/>
            <person name="Davis R.W."/>
            <person name="Theologis A."/>
            <person name="Ecker J.R."/>
        </authorList>
    </citation>
    <scope>NUCLEOTIDE SEQUENCE [LARGE SCALE MRNA]</scope>
    <source>
        <strain>cv. Columbia</strain>
    </source>
</reference>
<accession>O65693</accession>
<accession>Q8H0V9</accession>
<gene>
    <name type="ordered locus">At4g34730</name>
    <name type="ORF">T4L20.310</name>
</gene>
<evidence type="ECO:0000256" key="1">
    <source>
        <dbReference type="SAM" id="MobiDB-lite"/>
    </source>
</evidence>
<evidence type="ECO:0000305" key="2"/>
<organism>
    <name type="scientific">Arabidopsis thaliana</name>
    <name type="common">Mouse-ear cress</name>
    <dbReference type="NCBI Taxonomy" id="3702"/>
    <lineage>
        <taxon>Eukaryota</taxon>
        <taxon>Viridiplantae</taxon>
        <taxon>Streptophyta</taxon>
        <taxon>Embryophyta</taxon>
        <taxon>Tracheophyta</taxon>
        <taxon>Spermatophyta</taxon>
        <taxon>Magnoliopsida</taxon>
        <taxon>eudicotyledons</taxon>
        <taxon>Gunneridae</taxon>
        <taxon>Pentapetalae</taxon>
        <taxon>rosids</taxon>
        <taxon>malvids</taxon>
        <taxon>Brassicales</taxon>
        <taxon>Brassicaceae</taxon>
        <taxon>Camelineae</taxon>
        <taxon>Arabidopsis</taxon>
    </lineage>
</organism>
<dbReference type="EMBL" id="AL023094">
    <property type="protein sequence ID" value="CAA18852.1"/>
    <property type="status" value="ALT_SEQ"/>
    <property type="molecule type" value="Genomic_DNA"/>
</dbReference>
<dbReference type="EMBL" id="AL161586">
    <property type="protein sequence ID" value="CAB80190.1"/>
    <property type="status" value="ALT_SEQ"/>
    <property type="molecule type" value="Genomic_DNA"/>
</dbReference>
<dbReference type="EMBL" id="CP002687">
    <property type="protein sequence ID" value="AEE86416.1"/>
    <property type="molecule type" value="Genomic_DNA"/>
</dbReference>
<dbReference type="EMBL" id="CP002687">
    <property type="protein sequence ID" value="ANM66626.1"/>
    <property type="molecule type" value="Genomic_DNA"/>
</dbReference>
<dbReference type="EMBL" id="CP002687">
    <property type="protein sequence ID" value="ANM66627.1"/>
    <property type="molecule type" value="Genomic_DNA"/>
</dbReference>
<dbReference type="EMBL" id="BT002011">
    <property type="protein sequence ID" value="AAN72022.1"/>
    <property type="molecule type" value="mRNA"/>
</dbReference>
<dbReference type="EMBL" id="BT006250">
    <property type="protein sequence ID" value="AAP13358.1"/>
    <property type="molecule type" value="mRNA"/>
</dbReference>
<dbReference type="PIR" id="T05293">
    <property type="entry name" value="T05293"/>
</dbReference>
<dbReference type="RefSeq" id="NP_001328511.1">
    <property type="nucleotide sequence ID" value="NM_001342300.1"/>
</dbReference>
<dbReference type="RefSeq" id="NP_001328512.1">
    <property type="nucleotide sequence ID" value="NM_001342301.1"/>
</dbReference>
<dbReference type="RefSeq" id="NP_195199.2">
    <property type="nucleotide sequence ID" value="NM_119639.3"/>
</dbReference>
<dbReference type="SMR" id="O65693"/>
<dbReference type="FunCoup" id="O65693">
    <property type="interactions" value="528"/>
</dbReference>
<dbReference type="STRING" id="3702.O65693"/>
<dbReference type="iPTMnet" id="O65693"/>
<dbReference type="PaxDb" id="3702-AT4G34730.1"/>
<dbReference type="ProteomicsDB" id="225946"/>
<dbReference type="EnsemblPlants" id="AT4G34730.1">
    <property type="protein sequence ID" value="AT4G34730.1"/>
    <property type="gene ID" value="AT4G34730"/>
</dbReference>
<dbReference type="EnsemblPlants" id="AT4G34730.2">
    <property type="protein sequence ID" value="AT4G34730.2"/>
    <property type="gene ID" value="AT4G34730"/>
</dbReference>
<dbReference type="EnsemblPlants" id="AT4G34730.3">
    <property type="protein sequence ID" value="AT4G34730.3"/>
    <property type="gene ID" value="AT4G34730"/>
</dbReference>
<dbReference type="GeneID" id="829625"/>
<dbReference type="Gramene" id="AT4G34730.1">
    <property type="protein sequence ID" value="AT4G34730.1"/>
    <property type="gene ID" value="AT4G34730"/>
</dbReference>
<dbReference type="Gramene" id="AT4G34730.2">
    <property type="protein sequence ID" value="AT4G34730.2"/>
    <property type="gene ID" value="AT4G34730"/>
</dbReference>
<dbReference type="Gramene" id="AT4G34730.3">
    <property type="protein sequence ID" value="AT4G34730.3"/>
    <property type="gene ID" value="AT4G34730"/>
</dbReference>
<dbReference type="KEGG" id="ath:AT4G34730"/>
<dbReference type="Araport" id="AT4G34730"/>
<dbReference type="TAIR" id="AT4G34730">
    <property type="gene designation" value="RBF1"/>
</dbReference>
<dbReference type="eggNOG" id="KOG0232">
    <property type="taxonomic scope" value="Eukaryota"/>
</dbReference>
<dbReference type="HOGENOM" id="CLU_089475_2_0_1"/>
<dbReference type="InParanoid" id="O65693"/>
<dbReference type="OMA" id="ATIKCMA"/>
<dbReference type="PhylomeDB" id="O65693"/>
<dbReference type="PRO" id="PR:O65693"/>
<dbReference type="Proteomes" id="UP000006548">
    <property type="component" value="Chromosome 4"/>
</dbReference>
<dbReference type="ExpressionAtlas" id="O65693">
    <property type="expression patterns" value="baseline and differential"/>
</dbReference>
<dbReference type="GO" id="GO:0009507">
    <property type="term" value="C:chloroplast"/>
    <property type="evidence" value="ECO:0000314"/>
    <property type="project" value="TAIR"/>
</dbReference>
<dbReference type="GO" id="GO:0042254">
    <property type="term" value="P:ribosome biogenesis"/>
    <property type="evidence" value="ECO:0000315"/>
    <property type="project" value="TAIR"/>
</dbReference>
<dbReference type="GO" id="GO:0006364">
    <property type="term" value="P:rRNA processing"/>
    <property type="evidence" value="ECO:0007669"/>
    <property type="project" value="UniProtKB-KW"/>
</dbReference>
<dbReference type="FunFam" id="3.30.300.20:FF:000014">
    <property type="entry name" value="probable ribosome-binding factor A, chloroplastic"/>
    <property type="match status" value="1"/>
</dbReference>
<dbReference type="Gene3D" id="3.30.300.20">
    <property type="match status" value="1"/>
</dbReference>
<dbReference type="HAMAP" id="MF_00003">
    <property type="entry name" value="RbfA"/>
    <property type="match status" value="1"/>
</dbReference>
<dbReference type="InterPro" id="IPR015946">
    <property type="entry name" value="KH_dom-like_a/b"/>
</dbReference>
<dbReference type="InterPro" id="IPR000238">
    <property type="entry name" value="RbfA"/>
</dbReference>
<dbReference type="InterPro" id="IPR023799">
    <property type="entry name" value="RbfA_dom_sf"/>
</dbReference>
<dbReference type="InterPro" id="IPR020053">
    <property type="entry name" value="Ribosome-bd_factorA_CS"/>
</dbReference>
<dbReference type="NCBIfam" id="TIGR00082">
    <property type="entry name" value="rbfA"/>
    <property type="match status" value="1"/>
</dbReference>
<dbReference type="PANTHER" id="PTHR33515">
    <property type="entry name" value="RIBOSOME-BINDING FACTOR A, CHLOROPLASTIC-RELATED"/>
    <property type="match status" value="1"/>
</dbReference>
<dbReference type="PANTHER" id="PTHR33515:SF1">
    <property type="entry name" value="RIBOSOME-BINDING FACTOR A, CHLOROPLASTIC-RELATED"/>
    <property type="match status" value="1"/>
</dbReference>
<dbReference type="Pfam" id="PF02033">
    <property type="entry name" value="RBFA"/>
    <property type="match status" value="1"/>
</dbReference>
<dbReference type="SUPFAM" id="SSF89919">
    <property type="entry name" value="Ribosome-binding factor A, RbfA"/>
    <property type="match status" value="1"/>
</dbReference>
<dbReference type="PROSITE" id="PS01319">
    <property type="entry name" value="RBFA"/>
    <property type="match status" value="1"/>
</dbReference>
<name>RBFA_ARATH</name>
<keyword id="KW-0150">Chloroplast</keyword>
<keyword id="KW-0934">Plastid</keyword>
<keyword id="KW-1185">Reference proteome</keyword>
<keyword id="KW-0698">rRNA processing</keyword>
<keyword id="KW-0809">Transit peptide</keyword>